<name>URED_CITK8</name>
<organism>
    <name type="scientific">Citrobacter koseri (strain ATCC BAA-895 / CDC 4225-83 / SGSC4696)</name>
    <dbReference type="NCBI Taxonomy" id="290338"/>
    <lineage>
        <taxon>Bacteria</taxon>
        <taxon>Pseudomonadati</taxon>
        <taxon>Pseudomonadota</taxon>
        <taxon>Gammaproteobacteria</taxon>
        <taxon>Enterobacterales</taxon>
        <taxon>Enterobacteriaceae</taxon>
        <taxon>Citrobacter</taxon>
    </lineage>
</organism>
<feature type="chain" id="PRO_0000346558" description="Urease accessory protein UreD">
    <location>
        <begin position="1"/>
        <end position="285"/>
    </location>
</feature>
<comment type="function">
    <text evidence="1">Required for maturation of urease via the functional incorporation of the urease nickel metallocenter.</text>
</comment>
<comment type="subunit">
    <text evidence="1">UreD, UreF and UreG form a complex that acts as a GTP-hydrolysis-dependent molecular chaperone, activating the urease apoprotein by helping to assemble the nickel containing metallocenter of UreC. The UreE protein probably delivers the nickel.</text>
</comment>
<comment type="subcellular location">
    <subcellularLocation>
        <location evidence="1">Cytoplasm</location>
    </subcellularLocation>
</comment>
<comment type="similarity">
    <text evidence="1">Belongs to the UreD family.</text>
</comment>
<keyword id="KW-0143">Chaperone</keyword>
<keyword id="KW-0963">Cytoplasm</keyword>
<keyword id="KW-0996">Nickel insertion</keyword>
<keyword id="KW-1185">Reference proteome</keyword>
<dbReference type="EMBL" id="CP000822">
    <property type="protein sequence ID" value="ABV15510.1"/>
    <property type="molecule type" value="Genomic_DNA"/>
</dbReference>
<dbReference type="RefSeq" id="WP_012135193.1">
    <property type="nucleotide sequence ID" value="NC_009792.1"/>
</dbReference>
<dbReference type="SMR" id="A8APU7"/>
<dbReference type="STRING" id="290338.CKO_04454"/>
<dbReference type="GeneID" id="45138023"/>
<dbReference type="KEGG" id="cko:CKO_04454"/>
<dbReference type="HOGENOM" id="CLU_056339_0_0_6"/>
<dbReference type="Proteomes" id="UP000008148">
    <property type="component" value="Chromosome"/>
</dbReference>
<dbReference type="GO" id="GO:0005737">
    <property type="term" value="C:cytoplasm"/>
    <property type="evidence" value="ECO:0007669"/>
    <property type="project" value="UniProtKB-SubCell"/>
</dbReference>
<dbReference type="GO" id="GO:0016151">
    <property type="term" value="F:nickel cation binding"/>
    <property type="evidence" value="ECO:0007669"/>
    <property type="project" value="UniProtKB-UniRule"/>
</dbReference>
<dbReference type="HAMAP" id="MF_01384">
    <property type="entry name" value="UreD"/>
    <property type="match status" value="1"/>
</dbReference>
<dbReference type="InterPro" id="IPR002669">
    <property type="entry name" value="UreD"/>
</dbReference>
<dbReference type="PANTHER" id="PTHR33643">
    <property type="entry name" value="UREASE ACCESSORY PROTEIN D"/>
    <property type="match status" value="1"/>
</dbReference>
<dbReference type="PANTHER" id="PTHR33643:SF1">
    <property type="entry name" value="UREASE ACCESSORY PROTEIN D"/>
    <property type="match status" value="1"/>
</dbReference>
<dbReference type="Pfam" id="PF01774">
    <property type="entry name" value="UreD"/>
    <property type="match status" value="1"/>
</dbReference>
<protein>
    <recommendedName>
        <fullName evidence="1">Urease accessory protein UreD</fullName>
    </recommendedName>
</protein>
<reference key="1">
    <citation type="submission" date="2007-08" db="EMBL/GenBank/DDBJ databases">
        <authorList>
            <consortium name="The Citrobacter koseri Genome Sequencing Project"/>
            <person name="McClelland M."/>
            <person name="Sanderson E.K."/>
            <person name="Porwollik S."/>
            <person name="Spieth J."/>
            <person name="Clifton W.S."/>
            <person name="Latreille P."/>
            <person name="Courtney L."/>
            <person name="Wang C."/>
            <person name="Pepin K."/>
            <person name="Bhonagiri V."/>
            <person name="Nash W."/>
            <person name="Johnson M."/>
            <person name="Thiruvilangam P."/>
            <person name="Wilson R."/>
        </authorList>
    </citation>
    <scope>NUCLEOTIDE SEQUENCE [LARGE SCALE GENOMIC DNA]</scope>
    <source>
        <strain>ATCC BAA-895 / CDC 4225-83 / SGSC4696</strain>
    </source>
</reference>
<proteinExistence type="inferred from homology"/>
<evidence type="ECO:0000255" key="1">
    <source>
        <dbReference type="HAMAP-Rule" id="MF_01384"/>
    </source>
</evidence>
<gene>
    <name evidence="1" type="primary">ureD</name>
    <name type="ordered locus">CKO_04454</name>
</gene>
<sequence>MHSPHADKGNALDTVAHKTLTRGWQAELDLRFTRAAHKTVLTSARHVGPLTVQRPFYPEDDVCHLYLLHPPGGIVGGDELTISATLATDSHALITQPGSGKFYRSRGPQAQLRQDFYLAPQATLEWLPQDTILFPGANANIQSVFHLAQESRLLAWDLLCLGRPVMQETFSHGTLRNRLEVWRDGTPLLIERLHLEGGSLHTVARHPWSGTLLCYPATEKMLDGVREQIAPLGDYAGATLIDSLLALRFLGHDNLLIQRVMRAVWQSLRPQLTQKPPLLPRIWQT</sequence>
<accession>A8APU7</accession>